<dbReference type="EC" id="2.7.10.1"/>
<dbReference type="EMBL" id="L07296">
    <property type="protein sequence ID" value="AAA40077.1"/>
    <property type="molecule type" value="mRNA"/>
</dbReference>
<dbReference type="CCDS" id="CCDS24618.1"/>
<dbReference type="PIR" id="I58375">
    <property type="entry name" value="I58375"/>
</dbReference>
<dbReference type="RefSeq" id="NP_032055.1">
    <property type="nucleotide sequence ID" value="NM_008029.3"/>
</dbReference>
<dbReference type="SMR" id="P35917"/>
<dbReference type="BioGRID" id="199709">
    <property type="interactions" value="19"/>
</dbReference>
<dbReference type="DIP" id="DIP-60714N"/>
<dbReference type="FunCoup" id="P35917">
    <property type="interactions" value="1163"/>
</dbReference>
<dbReference type="IntAct" id="P35917">
    <property type="interactions" value="3"/>
</dbReference>
<dbReference type="MINT" id="P35917"/>
<dbReference type="STRING" id="10090.ENSMUSP00000020617"/>
<dbReference type="BindingDB" id="P35917"/>
<dbReference type="ChEMBL" id="CHEMBL4758"/>
<dbReference type="DrugCentral" id="P35917"/>
<dbReference type="GuidetoPHARMACOLOGY" id="1814"/>
<dbReference type="GlyCosmos" id="P35917">
    <property type="glycosylation" value="13 sites, No reported glycans"/>
</dbReference>
<dbReference type="GlyGen" id="P35917">
    <property type="glycosylation" value="15 sites, 4 N-linked glycans (4 sites)"/>
</dbReference>
<dbReference type="iPTMnet" id="P35917"/>
<dbReference type="PhosphoSitePlus" id="P35917"/>
<dbReference type="CPTAC" id="non-CPTAC-3753"/>
<dbReference type="PaxDb" id="10090-ENSMUSP00000020617"/>
<dbReference type="PeptideAtlas" id="P35917"/>
<dbReference type="ProteomicsDB" id="298279"/>
<dbReference type="Antibodypedia" id="3429">
    <property type="antibodies" value="1075 antibodies from 47 providers"/>
</dbReference>
<dbReference type="DNASU" id="14257"/>
<dbReference type="Ensembl" id="ENSMUST00000020617.3">
    <property type="protein sequence ID" value="ENSMUSP00000020617.3"/>
    <property type="gene ID" value="ENSMUSG00000020357.4"/>
</dbReference>
<dbReference type="GeneID" id="14257"/>
<dbReference type="KEGG" id="mmu:14257"/>
<dbReference type="UCSC" id="uc007iqu.2">
    <property type="organism name" value="mouse"/>
</dbReference>
<dbReference type="AGR" id="MGI:95561"/>
<dbReference type="CTD" id="2324"/>
<dbReference type="MGI" id="MGI:95561">
    <property type="gene designation" value="Flt4"/>
</dbReference>
<dbReference type="VEuPathDB" id="HostDB:ENSMUSG00000020357"/>
<dbReference type="eggNOG" id="KOG0200">
    <property type="taxonomic scope" value="Eukaryota"/>
</dbReference>
<dbReference type="GeneTree" id="ENSGT00940000159358"/>
<dbReference type="HOGENOM" id="CLU_000288_49_4_1"/>
<dbReference type="InParanoid" id="P35917"/>
<dbReference type="OMA" id="WDDRQGM"/>
<dbReference type="OrthoDB" id="9873386at2759"/>
<dbReference type="PhylomeDB" id="P35917"/>
<dbReference type="TreeFam" id="TF325768"/>
<dbReference type="BRENDA" id="2.7.10.1">
    <property type="organism ID" value="3474"/>
</dbReference>
<dbReference type="Reactome" id="R-MMU-195399">
    <property type="pathway name" value="VEGF binds to VEGFR leading to receptor dimerization"/>
</dbReference>
<dbReference type="BioGRID-ORCS" id="14257">
    <property type="hits" value="4 hits in 82 CRISPR screens"/>
</dbReference>
<dbReference type="PRO" id="PR:P35917"/>
<dbReference type="Proteomes" id="UP000000589">
    <property type="component" value="Chromosome 11"/>
</dbReference>
<dbReference type="RNAct" id="P35917">
    <property type="molecule type" value="protein"/>
</dbReference>
<dbReference type="Bgee" id="ENSMUSG00000020357">
    <property type="expression patterns" value="Expressed in endothelial cell of lymphatic vessel and 205 other cell types or tissues"/>
</dbReference>
<dbReference type="ExpressionAtlas" id="P35917">
    <property type="expression patterns" value="baseline and differential"/>
</dbReference>
<dbReference type="GO" id="GO:0005737">
    <property type="term" value="C:cytoplasm"/>
    <property type="evidence" value="ECO:0007669"/>
    <property type="project" value="UniProtKB-SubCell"/>
</dbReference>
<dbReference type="GO" id="GO:0005634">
    <property type="term" value="C:nucleus"/>
    <property type="evidence" value="ECO:0007669"/>
    <property type="project" value="UniProtKB-SubCell"/>
</dbReference>
<dbReference type="GO" id="GO:0005886">
    <property type="term" value="C:plasma membrane"/>
    <property type="evidence" value="ECO:0000304"/>
    <property type="project" value="Reactome"/>
</dbReference>
<dbReference type="GO" id="GO:0043235">
    <property type="term" value="C:receptor complex"/>
    <property type="evidence" value="ECO:0000266"/>
    <property type="project" value="MGI"/>
</dbReference>
<dbReference type="GO" id="GO:0005524">
    <property type="term" value="F:ATP binding"/>
    <property type="evidence" value="ECO:0007669"/>
    <property type="project" value="UniProtKB-KW"/>
</dbReference>
<dbReference type="GO" id="GO:0019838">
    <property type="term" value="F:growth factor binding"/>
    <property type="evidence" value="ECO:0007669"/>
    <property type="project" value="Ensembl"/>
</dbReference>
<dbReference type="GO" id="GO:0042803">
    <property type="term" value="F:protein homodimerization activity"/>
    <property type="evidence" value="ECO:0000250"/>
    <property type="project" value="UniProtKB"/>
</dbReference>
<dbReference type="GO" id="GO:0019903">
    <property type="term" value="F:protein phosphatase binding"/>
    <property type="evidence" value="ECO:0007669"/>
    <property type="project" value="Ensembl"/>
</dbReference>
<dbReference type="GO" id="GO:0005021">
    <property type="term" value="F:vascular endothelial growth factor receptor activity"/>
    <property type="evidence" value="ECO:0000316"/>
    <property type="project" value="MGI"/>
</dbReference>
<dbReference type="GO" id="GO:0048514">
    <property type="term" value="P:blood vessel morphogenesis"/>
    <property type="evidence" value="ECO:0000315"/>
    <property type="project" value="UniProtKB"/>
</dbReference>
<dbReference type="GO" id="GO:0048286">
    <property type="term" value="P:lung alveolus development"/>
    <property type="evidence" value="ECO:0000315"/>
    <property type="project" value="MGI"/>
</dbReference>
<dbReference type="GO" id="GO:0001945">
    <property type="term" value="P:lymph vessel development"/>
    <property type="evidence" value="ECO:0000315"/>
    <property type="project" value="BHF-UCL"/>
</dbReference>
<dbReference type="GO" id="GO:0001946">
    <property type="term" value="P:lymphangiogenesis"/>
    <property type="evidence" value="ECO:0000315"/>
    <property type="project" value="UniProtKB"/>
</dbReference>
<dbReference type="GO" id="GO:0043066">
    <property type="term" value="P:negative regulation of apoptotic process"/>
    <property type="evidence" value="ECO:0007669"/>
    <property type="project" value="Ensembl"/>
</dbReference>
<dbReference type="GO" id="GO:0008284">
    <property type="term" value="P:positive regulation of cell population proliferation"/>
    <property type="evidence" value="ECO:0000316"/>
    <property type="project" value="MGI"/>
</dbReference>
<dbReference type="GO" id="GO:0010595">
    <property type="term" value="P:positive regulation of endothelial cell migration"/>
    <property type="evidence" value="ECO:0007669"/>
    <property type="project" value="Ensembl"/>
</dbReference>
<dbReference type="GO" id="GO:0001938">
    <property type="term" value="P:positive regulation of endothelial cell proliferation"/>
    <property type="evidence" value="ECO:0007669"/>
    <property type="project" value="Ensembl"/>
</dbReference>
<dbReference type="GO" id="GO:0070374">
    <property type="term" value="P:positive regulation of ERK1 and ERK2 cascade"/>
    <property type="evidence" value="ECO:0007669"/>
    <property type="project" value="Ensembl"/>
</dbReference>
<dbReference type="GO" id="GO:0046330">
    <property type="term" value="P:positive regulation of JNK cascade"/>
    <property type="evidence" value="ECO:0007669"/>
    <property type="project" value="Ensembl"/>
</dbReference>
<dbReference type="GO" id="GO:0010575">
    <property type="term" value="P:positive regulation of vascular endothelial growth factor production"/>
    <property type="evidence" value="ECO:0007669"/>
    <property type="project" value="Ensembl"/>
</dbReference>
<dbReference type="GO" id="GO:0046777">
    <property type="term" value="P:protein autophosphorylation"/>
    <property type="evidence" value="ECO:0000250"/>
    <property type="project" value="UniProtKB"/>
</dbReference>
<dbReference type="GO" id="GO:0060312">
    <property type="term" value="P:regulation of blood vessel remodeling"/>
    <property type="evidence" value="ECO:0000315"/>
    <property type="project" value="UniProtKB"/>
</dbReference>
<dbReference type="GO" id="GO:0007585">
    <property type="term" value="P:respiratory gaseous exchange by respiratory system"/>
    <property type="evidence" value="ECO:0000315"/>
    <property type="project" value="MGI"/>
</dbReference>
<dbReference type="GO" id="GO:0003016">
    <property type="term" value="P:respiratory system process"/>
    <property type="evidence" value="ECO:0000315"/>
    <property type="project" value="MGI"/>
</dbReference>
<dbReference type="GO" id="GO:0002040">
    <property type="term" value="P:sprouting angiogenesis"/>
    <property type="evidence" value="ECO:0000315"/>
    <property type="project" value="UniProtKB"/>
</dbReference>
<dbReference type="GO" id="GO:0048010">
    <property type="term" value="P:vascular endothelial growth factor receptor signaling pathway"/>
    <property type="evidence" value="ECO:0000266"/>
    <property type="project" value="MGI"/>
</dbReference>
<dbReference type="GO" id="GO:0038084">
    <property type="term" value="P:vascular endothelial growth factor signaling pathway"/>
    <property type="evidence" value="ECO:0000250"/>
    <property type="project" value="UniProtKB"/>
</dbReference>
<dbReference type="GO" id="GO:0001944">
    <property type="term" value="P:vasculature development"/>
    <property type="evidence" value="ECO:0000315"/>
    <property type="project" value="UniProtKB"/>
</dbReference>
<dbReference type="CDD" id="cd00096">
    <property type="entry name" value="Ig"/>
    <property type="match status" value="1"/>
</dbReference>
<dbReference type="CDD" id="cd05862">
    <property type="entry name" value="IgI_VEGFR"/>
    <property type="match status" value="1"/>
</dbReference>
<dbReference type="FunFam" id="1.10.510.10:FF:000077">
    <property type="entry name" value="Vascular endothelial growth factor receptor 2"/>
    <property type="match status" value="1"/>
</dbReference>
<dbReference type="FunFam" id="2.60.40.10:FF:000532">
    <property type="entry name" value="Vascular endothelial growth factor receptor 2"/>
    <property type="match status" value="1"/>
</dbReference>
<dbReference type="FunFam" id="3.30.200.20:FF:000041">
    <property type="entry name" value="Vascular endothelial growth factor receptor 2"/>
    <property type="match status" value="1"/>
</dbReference>
<dbReference type="FunFam" id="2.60.40.10:FF:000143">
    <property type="entry name" value="Vascular endothelial growth factor receptor 3"/>
    <property type="match status" value="1"/>
</dbReference>
<dbReference type="FunFam" id="2.60.40.10:FF:000247">
    <property type="entry name" value="Vascular endothelial growth factor receptor 3"/>
    <property type="match status" value="1"/>
</dbReference>
<dbReference type="FunFam" id="2.60.40.10:FF:000411">
    <property type="entry name" value="Vascular endothelial growth factor receptor 3"/>
    <property type="match status" value="1"/>
</dbReference>
<dbReference type="FunFam" id="2.60.40.10:FF:000479">
    <property type="entry name" value="Vascular endothelial growth factor receptor 3"/>
    <property type="match status" value="1"/>
</dbReference>
<dbReference type="FunFam" id="2.60.40.10:FF:000548">
    <property type="entry name" value="vascular endothelial growth factor receptor 3"/>
    <property type="match status" value="1"/>
</dbReference>
<dbReference type="FunFam" id="2.60.40.10:FF:000949">
    <property type="entry name" value="vascular endothelial growth factor receptor 3"/>
    <property type="match status" value="1"/>
</dbReference>
<dbReference type="Gene3D" id="2.60.40.10">
    <property type="entry name" value="Immunoglobulins"/>
    <property type="match status" value="7"/>
</dbReference>
<dbReference type="Gene3D" id="3.30.200.20">
    <property type="entry name" value="Phosphorylase Kinase, domain 1"/>
    <property type="match status" value="1"/>
</dbReference>
<dbReference type="Gene3D" id="1.10.510.10">
    <property type="entry name" value="Transferase(Phosphotransferase) domain 1"/>
    <property type="match status" value="1"/>
</dbReference>
<dbReference type="InterPro" id="IPR007110">
    <property type="entry name" value="Ig-like_dom"/>
</dbReference>
<dbReference type="InterPro" id="IPR036179">
    <property type="entry name" value="Ig-like_dom_sf"/>
</dbReference>
<dbReference type="InterPro" id="IPR013783">
    <property type="entry name" value="Ig-like_fold"/>
</dbReference>
<dbReference type="InterPro" id="IPR013098">
    <property type="entry name" value="Ig_I-set"/>
</dbReference>
<dbReference type="InterPro" id="IPR003599">
    <property type="entry name" value="Ig_sub"/>
</dbReference>
<dbReference type="InterPro" id="IPR003598">
    <property type="entry name" value="Ig_sub2"/>
</dbReference>
<dbReference type="InterPro" id="IPR011009">
    <property type="entry name" value="Kinase-like_dom_sf"/>
</dbReference>
<dbReference type="InterPro" id="IPR000719">
    <property type="entry name" value="Prot_kinase_dom"/>
</dbReference>
<dbReference type="InterPro" id="IPR017441">
    <property type="entry name" value="Protein_kinase_ATP_BS"/>
</dbReference>
<dbReference type="InterPro" id="IPR050122">
    <property type="entry name" value="RTK"/>
</dbReference>
<dbReference type="InterPro" id="IPR001245">
    <property type="entry name" value="Ser-Thr/Tyr_kinase_cat_dom"/>
</dbReference>
<dbReference type="InterPro" id="IPR008266">
    <property type="entry name" value="Tyr_kinase_AS"/>
</dbReference>
<dbReference type="InterPro" id="IPR020635">
    <property type="entry name" value="Tyr_kinase_cat_dom"/>
</dbReference>
<dbReference type="InterPro" id="IPR001824">
    <property type="entry name" value="Tyr_kinase_rcpt_3_CS"/>
</dbReference>
<dbReference type="InterPro" id="IPR041348">
    <property type="entry name" value="VEGFR-2_TMD"/>
</dbReference>
<dbReference type="InterPro" id="IPR055229">
    <property type="entry name" value="VEGFR1-3_5th"/>
</dbReference>
<dbReference type="InterPro" id="IPR055238">
    <property type="entry name" value="VEGFR1-3_N_Ig-like"/>
</dbReference>
<dbReference type="PANTHER" id="PTHR24416">
    <property type="entry name" value="TYROSINE-PROTEIN KINASE RECEPTOR"/>
    <property type="match status" value="1"/>
</dbReference>
<dbReference type="PANTHER" id="PTHR24416:SF49">
    <property type="entry name" value="VASCULAR ENDOTHELIAL GROWTH FACTOR RECEPTOR 3"/>
    <property type="match status" value="1"/>
</dbReference>
<dbReference type="Pfam" id="PF07679">
    <property type="entry name" value="I-set"/>
    <property type="match status" value="1"/>
</dbReference>
<dbReference type="Pfam" id="PF13927">
    <property type="entry name" value="Ig_3"/>
    <property type="match status" value="2"/>
</dbReference>
<dbReference type="Pfam" id="PF22971">
    <property type="entry name" value="Ig_VEGFR-1-like_5th"/>
    <property type="match status" value="1"/>
</dbReference>
<dbReference type="Pfam" id="PF07714">
    <property type="entry name" value="PK_Tyr_Ser-Thr"/>
    <property type="match status" value="1"/>
</dbReference>
<dbReference type="Pfam" id="PF21339">
    <property type="entry name" value="VEGFR-1-like_Ig-like"/>
    <property type="match status" value="1"/>
</dbReference>
<dbReference type="Pfam" id="PF17988">
    <property type="entry name" value="VEGFR-2_TMD"/>
    <property type="match status" value="1"/>
</dbReference>
<dbReference type="Pfam" id="PF22854">
    <property type="entry name" value="VEGFR1-3_N_Ig-like"/>
    <property type="match status" value="1"/>
</dbReference>
<dbReference type="PIRSF" id="PIRSF000615">
    <property type="entry name" value="TyrPK_CSF1-R"/>
    <property type="match status" value="1"/>
</dbReference>
<dbReference type="PRINTS" id="PR01832">
    <property type="entry name" value="VEGFRECEPTOR"/>
</dbReference>
<dbReference type="PRINTS" id="PR01835">
    <property type="entry name" value="VEGFRECEPTR3"/>
</dbReference>
<dbReference type="SMART" id="SM00409">
    <property type="entry name" value="IG"/>
    <property type="match status" value="6"/>
</dbReference>
<dbReference type="SMART" id="SM00408">
    <property type="entry name" value="IGc2"/>
    <property type="match status" value="4"/>
</dbReference>
<dbReference type="SMART" id="SM00219">
    <property type="entry name" value="TyrKc"/>
    <property type="match status" value="1"/>
</dbReference>
<dbReference type="SUPFAM" id="SSF48726">
    <property type="entry name" value="Immunoglobulin"/>
    <property type="match status" value="5"/>
</dbReference>
<dbReference type="SUPFAM" id="SSF56112">
    <property type="entry name" value="Protein kinase-like (PK-like)"/>
    <property type="match status" value="1"/>
</dbReference>
<dbReference type="PROSITE" id="PS50835">
    <property type="entry name" value="IG_LIKE"/>
    <property type="match status" value="5"/>
</dbReference>
<dbReference type="PROSITE" id="PS00107">
    <property type="entry name" value="PROTEIN_KINASE_ATP"/>
    <property type="match status" value="1"/>
</dbReference>
<dbReference type="PROSITE" id="PS50011">
    <property type="entry name" value="PROTEIN_KINASE_DOM"/>
    <property type="match status" value="1"/>
</dbReference>
<dbReference type="PROSITE" id="PS00109">
    <property type="entry name" value="PROTEIN_KINASE_TYR"/>
    <property type="match status" value="1"/>
</dbReference>
<dbReference type="PROSITE" id="PS00240">
    <property type="entry name" value="RECEPTOR_TYR_KIN_III"/>
    <property type="match status" value="1"/>
</dbReference>
<proteinExistence type="evidence at protein level"/>
<keyword id="KW-0037">Angiogenesis</keyword>
<keyword id="KW-0067">ATP-binding</keyword>
<keyword id="KW-1003">Cell membrane</keyword>
<keyword id="KW-0963">Cytoplasm</keyword>
<keyword id="KW-1015">Disulfide bond</keyword>
<keyword id="KW-0325">Glycoprotein</keyword>
<keyword id="KW-0393">Immunoglobulin domain</keyword>
<keyword id="KW-0418">Kinase</keyword>
<keyword id="KW-0472">Membrane</keyword>
<keyword id="KW-0547">Nucleotide-binding</keyword>
<keyword id="KW-0539">Nucleus</keyword>
<keyword id="KW-0597">Phosphoprotein</keyword>
<keyword id="KW-0675">Receptor</keyword>
<keyword id="KW-1185">Reference proteome</keyword>
<keyword id="KW-0677">Repeat</keyword>
<keyword id="KW-0732">Signal</keyword>
<keyword id="KW-0808">Transferase</keyword>
<keyword id="KW-0812">Transmembrane</keyword>
<keyword id="KW-1133">Transmembrane helix</keyword>
<keyword id="KW-0829">Tyrosine-protein kinase</keyword>
<protein>
    <recommendedName>
        <fullName>Vascular endothelial growth factor receptor 3</fullName>
        <shortName>VEGFR-3</shortName>
        <ecNumber>2.7.10.1</ecNumber>
    </recommendedName>
    <alternativeName>
        <fullName>Fms-like tyrosine kinase 4</fullName>
        <shortName>FLT-4</shortName>
    </alternativeName>
    <alternativeName>
        <fullName>Tyrosine-protein kinase receptor FLT4</fullName>
    </alternativeName>
</protein>
<organism>
    <name type="scientific">Mus musculus</name>
    <name type="common">Mouse</name>
    <dbReference type="NCBI Taxonomy" id="10090"/>
    <lineage>
        <taxon>Eukaryota</taxon>
        <taxon>Metazoa</taxon>
        <taxon>Chordata</taxon>
        <taxon>Craniata</taxon>
        <taxon>Vertebrata</taxon>
        <taxon>Euteleostomi</taxon>
        <taxon>Mammalia</taxon>
        <taxon>Eutheria</taxon>
        <taxon>Euarchontoglires</taxon>
        <taxon>Glires</taxon>
        <taxon>Rodentia</taxon>
        <taxon>Myomorpha</taxon>
        <taxon>Muroidea</taxon>
        <taxon>Muridae</taxon>
        <taxon>Murinae</taxon>
        <taxon>Mus</taxon>
        <taxon>Mus</taxon>
    </lineage>
</organism>
<name>VGFR3_MOUSE</name>
<reference key="1">
    <citation type="journal article" date="1993" name="Oncogene">
        <title>Molecular cloning of murine FLT and FLT4.</title>
        <authorList>
            <person name="Finnerty H."/>
            <person name="Kelleher K."/>
            <person name="Morris G.E."/>
            <person name="Bean K."/>
            <person name="Merberg D.M."/>
            <person name="Kriz R."/>
            <person name="Morris J.C."/>
            <person name="Sookdeo H."/>
            <person name="Turner K.J."/>
            <person name="Wood C.R."/>
        </authorList>
    </citation>
    <scope>NUCLEOTIDE SEQUENCE [MRNA]</scope>
    <source>
        <strain>C57BL/6J</strain>
    </source>
</reference>
<reference key="2">
    <citation type="journal article" date="1992" name="Genomics">
        <title>Chromosomal localization of FLT4, a novel receptor-type tyrosine kinase gene.</title>
        <authorList>
            <person name="Galland F."/>
            <person name="Karamysheva A."/>
            <person name="Mattei M.-G."/>
            <person name="Rosnet O."/>
            <person name="Marchetto S."/>
            <person name="Birnbaum D."/>
        </authorList>
    </citation>
    <scope>NUCLEOTIDE SEQUENCE [MRNA] OF 1033-1072</scope>
</reference>
<reference key="3">
    <citation type="journal article" date="1998" name="Science">
        <title>Cardiovascular failure in mouse embryos deficient in VEGF receptor-3.</title>
        <authorList>
            <person name="Dumont D.J."/>
            <person name="Jussila L."/>
            <person name="Taipale J."/>
            <person name="Lymboussaki A."/>
            <person name="Mustonen T."/>
            <person name="Pajusola K."/>
            <person name="Breitman M."/>
            <person name="Alitalo K."/>
        </authorList>
    </citation>
    <scope>DISRUPTION PHENOTYPE</scope>
    <scope>FUNCTION</scope>
</reference>
<reference key="4">
    <citation type="journal article" date="2006" name="J. Proteome Res.">
        <title>Proteome-wide characterization of N-glycosylation events by diagonal chromatography.</title>
        <authorList>
            <person name="Ghesquiere B."/>
            <person name="Van Damme J."/>
            <person name="Martens L."/>
            <person name="Vandekerckhove J."/>
            <person name="Gevaert K."/>
        </authorList>
    </citation>
    <scope>GLYCOSYLATION [LARGE SCALE ANALYSIS] AT ASN-582</scope>
    <source>
        <strain>C57BL/6J</strain>
        <tissue>Plasma</tissue>
    </source>
</reference>
<reference key="5">
    <citation type="journal article" date="2008" name="Nature">
        <title>Blocking VEGFR-3 suppresses angiogenic sprouting and vascular network formation.</title>
        <authorList>
            <person name="Tammela T."/>
            <person name="Zarkada G."/>
            <person name="Wallgard E."/>
            <person name="Murtomaki A."/>
            <person name="Suchting S."/>
            <person name="Wirzenius M."/>
            <person name="Waltari M."/>
            <person name="Hellstrom M."/>
            <person name="Schomber T."/>
            <person name="Peltonen R."/>
            <person name="Freitas C."/>
            <person name="Duarte A."/>
            <person name="Isoniemi H."/>
            <person name="Laakkonen P."/>
            <person name="Christofori G."/>
            <person name="Yla-Herttuala S."/>
            <person name="Shibuya M."/>
            <person name="Pytowski B."/>
            <person name="Eichmann A."/>
            <person name="Betsholtz C."/>
            <person name="Alitalo K."/>
        </authorList>
    </citation>
    <scope>FUNCTION</scope>
    <scope>TISSUE SPECIFICITY</scope>
</reference>
<reference key="6">
    <citation type="journal article" date="2010" name="Cell Res.">
        <title>VEGFR-3 ligand-binding and kinase activity are required for lymphangiogenesis but not for angiogenesis.</title>
        <authorList>
            <person name="Zhang L."/>
            <person name="Zhou F."/>
            <person name="Han W."/>
            <person name="Shen B."/>
            <person name="Luo J."/>
            <person name="Shibuya M."/>
            <person name="He Y."/>
        </authorList>
    </citation>
    <scope>FUNCTION IN LYMPHANGIOGENESIS</scope>
</reference>
<reference key="7">
    <citation type="journal article" date="2010" name="Nature">
        <title>Ephrin-B2 controls VEGF-induced angiogenesis and lymphangiogenesis.</title>
        <authorList>
            <person name="Wang Y."/>
            <person name="Nakayama M."/>
            <person name="Pitulescu M.E."/>
            <person name="Schmidt T.S."/>
            <person name="Bochenek M.L."/>
            <person name="Sakakibara A."/>
            <person name="Adams S."/>
            <person name="Davy A."/>
            <person name="Deutsch U."/>
            <person name="Luthi U."/>
            <person name="Barberis A."/>
            <person name="Benjamin L.E."/>
            <person name="Makinen T."/>
            <person name="Nobes C.D."/>
            <person name="Adams R.H."/>
        </authorList>
    </citation>
    <scope>FUNCTION IN ACTIVATION OF SIGNALING PATHWAYS</scope>
    <scope>SUBCELLULAR LOCATION</scope>
</reference>
<reference key="8">
    <citation type="journal article" date="2011" name="Mol. Cancer">
        <title>Soluble vascular endothelial growth factor receptor-3 suppresses lymphangiogenesis and lymphatic metastasis in bladder cancer.</title>
        <authorList>
            <person name="Yang H."/>
            <person name="Kim C."/>
            <person name="Kim M.J."/>
            <person name="Schwendener R.A."/>
            <person name="Alitalo K."/>
            <person name="Heston W."/>
            <person name="Kim I."/>
            <person name="Kim W.J."/>
            <person name="Koh G.Y."/>
        </authorList>
    </citation>
    <scope>FUNCTION IN LYMPHANGIOGENESIS</scope>
    <scope>ROLE IN CANCER</scope>
</reference>
<reference key="9">
    <citation type="journal article" date="2011" name="Nat. Cell Biol.">
        <title>VEGFR-3 controls tip to stalk conversion at vessel fusion sites by reinforcing Notch signalling.</title>
        <authorList>
            <person name="Tammela T."/>
            <person name="Zarkada G."/>
            <person name="Nurmi H."/>
            <person name="Jakobsson L."/>
            <person name="Heinolainen K."/>
            <person name="Tvorogov D."/>
            <person name="Zheng W."/>
            <person name="Franco C.A."/>
            <person name="Murtomaki A."/>
            <person name="Aranda E."/>
            <person name="Miura N."/>
            <person name="Yla-Herttuala S."/>
            <person name="Fruttiger M."/>
            <person name="Makinen T."/>
            <person name="Eichmann A."/>
            <person name="Pollard J.W."/>
            <person name="Gerhardt H."/>
            <person name="Alitalo K."/>
        </authorList>
    </citation>
    <scope>FUNCTION</scope>
</reference>
<reference key="10">
    <citation type="journal article" date="2017" name="Circ. Res.">
        <title>Polydom Is an Extracellular Matrix Protein Involved in Lymphatic Vessel Remodeling.</title>
        <authorList>
            <person name="Morooka N."/>
            <person name="Futaki S."/>
            <person name="Sato-Nishiuchi R."/>
            <person name="Nishino M."/>
            <person name="Totani Y."/>
            <person name="Shimono C."/>
            <person name="Nakano I."/>
            <person name="Nakajima H."/>
            <person name="Mochizuki N."/>
            <person name="Sekiguchi K."/>
        </authorList>
    </citation>
    <scope>DEVELOPMENTAL STAGE</scope>
</reference>
<sequence length="1363" mass="153016">MQPGAALNLRLWLCLGLLQGLANGYSMTPPTLNITEDSYVIDTGDSLSISCRGQHPLEWTWPGAQEVLTTGGKDSEDTRVVHDCEGTEARPYCKVLLLAQTHANNTGSYHCYYKYIKARIEGTTAASTYVFVRDFKHPFINKPDTLLVNRKDSMWVPCLVSIPGLNITLRSQSSALHPDGQEVLWDDRRGMRVPTQLLRDALYLQCETTWGDQNFLSNLFVVHITGNELYDIQLYPKKSMELLVGEKLVLNCTVWAEFDSGVTFDWDYPGKQAERAKWVPERRSQQTHTELSSILTIHNVSQNDLGPYVCEANNGIQRFRESTEVIVHEKPFISVEWLKGPVLEATAGDELVKLPVKLAAYPPPEFQWYKDRKAVTGRHNPHALVLKEVTEASAGVYTLALWNSAAGLRQNISLELVVNVPPHIHEKEASSPSIYSRHSRQTLTCTAYGVPQPLSVQWHWRPWTPCKTFAQRSLRRRQQRDGMPQCRDWKEVTTQDAVNPIESLDSWTEFVEGKNKTVSKLVIQDANVSAMYKCVVVNKVGQDERLIYFYVTTIPDGFSIESEPSEDPLEGQSVRLSCRADNYTYEHLRWYRLNLSTLHDAQGNPLLLDCKNVHLFATPLEANLEEAEPGARHATLSLNIPRVAPEDEGDYVCEVQDRRSQDKHCHKKYLSVQALEAPRLTQNLTDLLVNVSDSLEMRCPVAGAHVPSIVWYKDERLLEKESGIDLADSNQRLSIQRVREEDAGRYLCSVCNAKGCVNSSASVAVEGSEDKGSMEIVILIGTGVIAVFFWVLLLLIFCNMKRPAHADIKTGYLSIIMDPGEVPLEEQCEYLSYDASQWEFPRERLHLGRVLGHGAFGKVVEASAFGINKGSSCDTVAVKMLKEGATASEHRALMSELKILIHIGNHLNVVNLLGACTKPNGPLMVIVEFCKYGNLSNFLRVKRDTFNPYAEKSPEQRRRFRAMVEGAKADRRRPGSSDRALFTRFLMGKGSARRAPLVQEAEDLWLSPLTMEDLVCYSFQVARGMEFLASRKCIHRDLAARNILLSESDIVKICDFGLARDIYKDPDYVRKGSARLPLKWMAPESIFDKVYTTQSDVWSFGVLLWEIFSLGASPYPGVQINEEFCQRLKDGTRMRAPELATPAIRHIMQSCWSGDPKARPAFSDLVEILGDLLQGGGWQEEEEERMALHSSQSSEEDGFMQASTTALHITEADADDSPPSMHCHSLAARYYNCVSFPGRLARGTKTPGSSRMKTFEELPMTPTTYKASMDNQTDSGMVLASEEFEELESRHRPEGSFSCKGPGQHMDIPRGHPDPQGRRRRPTQGAQGGKVFYNNEYGEVSQPCTEGDCCPSAGSTFFADSSY</sequence>
<gene>
    <name type="primary">Flt4</name>
    <name type="synonym">Flt-4</name>
    <name type="synonym">Vegfr3</name>
</gene>
<comment type="function">
    <text evidence="8 9 10 11 12 14">Tyrosine-protein kinase that acts as a cell-surface receptor for VEGFC and VEGFD, and plays an essential role in adult lymphangiogenesis and in the development of the vascular network and the cardiovascular system during embryonic development. Promotes proliferation, survival and migration of endothelial cells, and regulates angiogenic sprouting. Signaling by activated FLT4 leads to enhanced production of VEGFC, and to a lesser degree VEGFA, thereby creating a positive feedback loop that enhances FLT4 signaling. Modulates KDR signaling by forming heterodimers. Mediates activation of the MAPK1/ERK2, MAPK3/ERK1 signaling pathway, of MAPK8 and the JUN signaling pathway, and of the AKT1 signaling pathway. Phosphorylates SHC1. Mediates phosphorylation of PIK3R1, the regulatory subunit of phosphatidylinositol 3-kinase. Promotes phosphorylation of MAPK8 at 'Thr-183' and 'Tyr-185', and of AKT1 at 'Ser-473'.</text>
</comment>
<comment type="catalytic activity">
    <reaction evidence="5">
        <text>L-tyrosyl-[protein] + ATP = O-phospho-L-tyrosyl-[protein] + ADP + H(+)</text>
        <dbReference type="Rhea" id="RHEA:10596"/>
        <dbReference type="Rhea" id="RHEA-COMP:10136"/>
        <dbReference type="Rhea" id="RHEA-COMP:20101"/>
        <dbReference type="ChEBI" id="CHEBI:15378"/>
        <dbReference type="ChEBI" id="CHEBI:30616"/>
        <dbReference type="ChEBI" id="CHEBI:46858"/>
        <dbReference type="ChEBI" id="CHEBI:61978"/>
        <dbReference type="ChEBI" id="CHEBI:456216"/>
        <dbReference type="EC" id="2.7.10.1"/>
    </reaction>
</comment>
<comment type="activity regulation">
    <text evidence="1">Present in an inactive conformation in the absence of bound ligand. Binding of VEGFC or VEGFD leads to dimerization and activation by autophosphorylation on tyrosine residues (By similarity).</text>
</comment>
<comment type="subunit">
    <text evidence="1">Interacts with VEGFC and VEGFD. Monomer in the absence of bound VEGFC or VEGFD. Homodimer in the presence of bound VEGFC or VEGFD. Can also form a heterodimer with KDR. Interacts with PTPN14; the interaction is enhanced by stimulation with VEGFC. Interacts with CRK, GRB2, PTK2/FAK1, SHC1, PIK3R1 and PTPN11/SHP-2. Identified in a complex with SRC and ITGB1 (By similarity).</text>
</comment>
<comment type="interaction">
    <interactant intactId="EBI-7845747">
        <id>P35917</id>
    </interactant>
    <interactant intactId="EBI-1391846">
        <id>P98078</id>
        <label>Dab2</label>
    </interactant>
    <organismsDiffer>false</organismsDiffer>
    <experiments>3</experiments>
</comment>
<comment type="interaction">
    <interactant intactId="EBI-7845747">
        <id>P35917</id>
    </interactant>
    <interactant intactId="EBI-1555005">
        <id>P35918</id>
        <label>Kdr</label>
    </interactant>
    <organismsDiffer>false</organismsDiffer>
    <experiments>3</experiments>
</comment>
<comment type="interaction">
    <interactant intactId="EBI-7845747">
        <id>P35917</id>
    </interactant>
    <interactant intactId="EBI-15946047">
        <id>Q99NH2-1</id>
        <label>Pard3</label>
    </interactant>
    <organismsDiffer>false</organismsDiffer>
    <experiments>3</experiments>
</comment>
<comment type="subcellular location">
    <subcellularLocation>
        <location evidence="9">Cell membrane</location>
        <topology evidence="9">Single-pass type I membrane protein</topology>
    </subcellularLocation>
    <subcellularLocation>
        <location evidence="9">Cytoplasm</location>
    </subcellularLocation>
    <subcellularLocation>
        <location evidence="9">Nucleus</location>
    </subcellularLocation>
    <text>Ligand-mediated autophosphorylation leads to rapid internalization.</text>
</comment>
<comment type="tissue specificity">
    <text evidence="8">Expressed in adult lung and liver, and in fetal liver, brain, intestine and placenta.</text>
</comment>
<comment type="developmental stage">
    <text evidence="13">Expressed in the skin and mesentery lymphatic vessels at 15.5 and 18.5 dpc (at protein level).</text>
</comment>
<comment type="domain">
    <text evidence="1">The first and second Ig-like C2-type (immunoglobulin-like) domains are sufficient for VEGFC binding. The fourth and fifth Ig-like C2-type (immunoglobulin-like) domains are sufficient for homodimerization. The fifth and seventh Ig-like C2-type (immunoglobulin-like) domains are required for autophosphorylation and further activation.</text>
</comment>
<comment type="PTM">
    <text evidence="1">Autophosphorylated on tyrosine residues upon ligand binding. Autophosphorylation occurs in trans, i.e. one subunit of the dimeric receptor phosphorylates tyrosine residues on the other subunit. Phosphorylation in response to H(2)O(2) is mediated by a process that requires SRC and PRKCD activity. Phosphorylation at Tyr-1068 is required for autophosphorylation at additional tyrosine residues. Phosphorylation at Tyr-1063 and Tyr-1337 is important for interaction with CRK and subsequent activation of MAPK8. Phosphorylation at Tyr-1230, Tyr-1231 and Tyr-1337 is important for interaction with GRB2 and subsequent activation of the AKT1 and MAPK1/ERK2 and/or MAPK3/ERK1 signaling pathways. In response to endothelial cell adhesion onto collagen, can also be phosphorylated in the absence of FLT4 kinase activity by SRC (By similarity).</text>
</comment>
<comment type="disruption phenotype">
    <text evidence="14">Embryonic lethality at about 13 dpc, due to failure of remodeling of the yolk sac capillary network and defects in remodeling and maturation of primary vascular networks.</text>
</comment>
<comment type="similarity">
    <text evidence="4">Belongs to the protein kinase superfamily. Tyr protein kinase family. CSF-1/PDGF receptor subfamily.</text>
</comment>
<accession>P35917</accession>
<evidence type="ECO:0000250" key="1">
    <source>
        <dbReference type="UniProtKB" id="P35916"/>
    </source>
</evidence>
<evidence type="ECO:0000255" key="2"/>
<evidence type="ECO:0000255" key="3">
    <source>
        <dbReference type="PROSITE-ProRule" id="PRU00114"/>
    </source>
</evidence>
<evidence type="ECO:0000255" key="4">
    <source>
        <dbReference type="PROSITE-ProRule" id="PRU00159"/>
    </source>
</evidence>
<evidence type="ECO:0000255" key="5">
    <source>
        <dbReference type="PROSITE-ProRule" id="PRU10028"/>
    </source>
</evidence>
<evidence type="ECO:0000256" key="6">
    <source>
        <dbReference type="SAM" id="MobiDB-lite"/>
    </source>
</evidence>
<evidence type="ECO:0000269" key="7">
    <source>
    </source>
</evidence>
<evidence type="ECO:0000269" key="8">
    <source>
    </source>
</evidence>
<evidence type="ECO:0000269" key="9">
    <source>
    </source>
</evidence>
<evidence type="ECO:0000269" key="10">
    <source>
    </source>
</evidence>
<evidence type="ECO:0000269" key="11">
    <source>
    </source>
</evidence>
<evidence type="ECO:0000269" key="12">
    <source>
    </source>
</evidence>
<evidence type="ECO:0000269" key="13">
    <source>
    </source>
</evidence>
<evidence type="ECO:0000269" key="14">
    <source>
    </source>
</evidence>
<feature type="signal peptide" evidence="2">
    <location>
        <begin position="1"/>
        <end position="24"/>
    </location>
</feature>
<feature type="chain" id="PRO_0000016777" description="Vascular endothelial growth factor receptor 3">
    <location>
        <begin position="25"/>
        <end position="1363"/>
    </location>
</feature>
<feature type="topological domain" description="Extracellular" evidence="2">
    <location>
        <begin position="25"/>
        <end position="775"/>
    </location>
</feature>
<feature type="transmembrane region" description="Helical" evidence="2">
    <location>
        <begin position="776"/>
        <end position="796"/>
    </location>
</feature>
<feature type="topological domain" description="Cytoplasmic" evidence="2">
    <location>
        <begin position="797"/>
        <end position="1363"/>
    </location>
</feature>
<feature type="domain" description="Ig-like C2-type 1">
    <location>
        <begin position="44"/>
        <end position="118"/>
    </location>
</feature>
<feature type="domain" description="Ig-like C2-type 2">
    <location>
        <begin position="151"/>
        <end position="213"/>
    </location>
</feature>
<feature type="domain" description="Ig-like C2-type 3">
    <location>
        <begin position="230"/>
        <end position="326"/>
    </location>
</feature>
<feature type="domain" description="Ig-like C2-type 4">
    <location>
        <begin position="331"/>
        <end position="415"/>
    </location>
</feature>
<feature type="domain" description="Ig-like C2-type 5">
    <location>
        <begin position="422"/>
        <end position="552"/>
    </location>
</feature>
<feature type="domain" description="Ig-like C2-type 6">
    <location>
        <begin position="555"/>
        <end position="671"/>
    </location>
</feature>
<feature type="domain" description="Ig-like C2-type 7">
    <location>
        <begin position="678"/>
        <end position="764"/>
    </location>
</feature>
<feature type="domain" description="Protein kinase" evidence="4">
    <location>
        <begin position="845"/>
        <end position="1173"/>
    </location>
</feature>
<feature type="region of interest" description="Disordered" evidence="6">
    <location>
        <begin position="1288"/>
        <end position="1330"/>
    </location>
</feature>
<feature type="compositionally biased region" description="Basic and acidic residues" evidence="6">
    <location>
        <begin position="1307"/>
        <end position="1317"/>
    </location>
</feature>
<feature type="active site" description="Proton acceptor" evidence="4 5">
    <location>
        <position position="1037"/>
    </location>
</feature>
<feature type="binding site" evidence="4">
    <location>
        <begin position="851"/>
        <end position="859"/>
    </location>
    <ligand>
        <name>ATP</name>
        <dbReference type="ChEBI" id="CHEBI:30616"/>
    </ligand>
</feature>
<feature type="binding site" evidence="4">
    <location>
        <position position="879"/>
    </location>
    <ligand>
        <name>ATP</name>
        <dbReference type="ChEBI" id="CHEBI:30616"/>
    </ligand>
</feature>
<feature type="modified residue" description="Phosphotyrosine; by SRC" evidence="1">
    <location>
        <position position="830"/>
    </location>
</feature>
<feature type="modified residue" description="Phosphotyrosine; by SRC" evidence="1">
    <location>
        <position position="833"/>
    </location>
</feature>
<feature type="modified residue" description="Phosphotyrosine; by autocatalysis and SRC" evidence="1">
    <location>
        <position position="1063"/>
    </location>
</feature>
<feature type="modified residue" description="Phosphotyrosine; by autocatalysis" evidence="1">
    <location>
        <position position="1068"/>
    </location>
</feature>
<feature type="modified residue" description="Phosphotyrosine; by autocatalysis" evidence="1">
    <location>
        <position position="1230"/>
    </location>
</feature>
<feature type="modified residue" description="Phosphotyrosine; by autocatalysis" evidence="1">
    <location>
        <position position="1231"/>
    </location>
</feature>
<feature type="modified residue" description="Phosphotyrosine; by autocatalysis" evidence="1">
    <location>
        <position position="1265"/>
    </location>
</feature>
<feature type="modified residue" description="Phosphotyrosine; by autocatalysis and SRC" evidence="1">
    <location>
        <position position="1333"/>
    </location>
</feature>
<feature type="modified residue" description="Phosphotyrosine; by autocatalysis and SRC" evidence="1">
    <location>
        <position position="1337"/>
    </location>
</feature>
<feature type="modified residue" description="Phosphotyrosine; by autocatalysis" evidence="1">
    <location>
        <position position="1363"/>
    </location>
</feature>
<feature type="glycosylation site" description="N-linked (GlcNAc...) asparagine" evidence="2">
    <location>
        <position position="33"/>
    </location>
</feature>
<feature type="glycosylation site" description="N-linked (GlcNAc...) asparagine" evidence="2">
    <location>
        <position position="104"/>
    </location>
</feature>
<feature type="glycosylation site" description="N-linked (GlcNAc...) asparagine" evidence="2">
    <location>
        <position position="166"/>
    </location>
</feature>
<feature type="glycosylation site" description="N-linked (GlcNAc...) asparagine" evidence="2">
    <location>
        <position position="251"/>
    </location>
</feature>
<feature type="glycosylation site" description="N-linked (GlcNAc...) asparagine" evidence="2">
    <location>
        <position position="299"/>
    </location>
</feature>
<feature type="glycosylation site" description="N-linked (GlcNAc...) asparagine" evidence="2">
    <location>
        <position position="411"/>
    </location>
</feature>
<feature type="glycosylation site" description="N-linked (GlcNAc...) asparagine" evidence="2">
    <location>
        <position position="515"/>
    </location>
</feature>
<feature type="glycosylation site" description="N-linked (GlcNAc...) asparagine" evidence="2">
    <location>
        <position position="527"/>
    </location>
</feature>
<feature type="glycosylation site" description="N-linked (GlcNAc...) asparagine" evidence="7">
    <location>
        <position position="582"/>
    </location>
</feature>
<feature type="glycosylation site" description="N-linked (GlcNAc...) asparagine" evidence="2">
    <location>
        <position position="594"/>
    </location>
</feature>
<feature type="glycosylation site" description="N-linked (GlcNAc...) asparagine" evidence="2">
    <location>
        <position position="683"/>
    </location>
</feature>
<feature type="glycosylation site" description="N-linked (GlcNAc...) asparagine" evidence="2">
    <location>
        <position position="690"/>
    </location>
</feature>
<feature type="glycosylation site" description="N-linked (GlcNAc...) asparagine" evidence="2">
    <location>
        <position position="758"/>
    </location>
</feature>
<feature type="disulfide bond" evidence="3">
    <location>
        <begin position="51"/>
        <end position="111"/>
    </location>
</feature>
<feature type="disulfide bond" evidence="3">
    <location>
        <begin position="158"/>
        <end position="206"/>
    </location>
</feature>
<feature type="disulfide bond" evidence="3">
    <location>
        <begin position="252"/>
        <end position="310"/>
    </location>
</feature>
<feature type="disulfide bond" evidence="3">
    <location>
        <begin position="445"/>
        <end position="534"/>
    </location>
</feature>
<feature type="disulfide bond" evidence="1">
    <location>
        <begin position="466"/>
        <end position="486"/>
    </location>
</feature>
<feature type="disulfide bond" evidence="3">
    <location>
        <begin position="578"/>
        <end position="653"/>
    </location>
</feature>
<feature type="disulfide bond" evidence="3">
    <location>
        <begin position="699"/>
        <end position="751"/>
    </location>
</feature>